<sequence>MGKITAIKKLKRLYRVDLSDLDEEKIYLCEDTIIHFFITIDKEVSETDLEEILAYDQFAQGKSLALYYISFKMRTGAEVRKYLLEHDINDTDQIEQVLSVLTENNLINDKSYAENFIEGKISMGSSGPYQIKQKLLTKGISNDVLSETLNEIYSEEKQIDVAYKLASKLSRTYGTRLTLKQLKDKIIQNLMNKGFSYSVSSIALDSLELEADEENEMDLLYSELDKVAKRYTKNYEGYERKQKITQALARKGFLYDDISSALRDYTFPE</sequence>
<proteinExistence type="inferred from homology"/>
<dbReference type="EMBL" id="AM406671">
    <property type="protein sequence ID" value="CAL99030.1"/>
    <property type="molecule type" value="Genomic_DNA"/>
</dbReference>
<dbReference type="RefSeq" id="WP_011836098.1">
    <property type="nucleotide sequence ID" value="NC_009004.1"/>
</dbReference>
<dbReference type="SMR" id="A2RNY5"/>
<dbReference type="STRING" id="416870.llmg_2466"/>
<dbReference type="KEGG" id="llm:llmg_2466"/>
<dbReference type="eggNOG" id="COG2137">
    <property type="taxonomic scope" value="Bacteria"/>
</dbReference>
<dbReference type="HOGENOM" id="CLU_066607_4_0_9"/>
<dbReference type="OrthoDB" id="5421057at2"/>
<dbReference type="PhylomeDB" id="A2RNY5"/>
<dbReference type="Proteomes" id="UP000000364">
    <property type="component" value="Chromosome"/>
</dbReference>
<dbReference type="GO" id="GO:0005737">
    <property type="term" value="C:cytoplasm"/>
    <property type="evidence" value="ECO:0007669"/>
    <property type="project" value="UniProtKB-SubCell"/>
</dbReference>
<dbReference type="GO" id="GO:0006282">
    <property type="term" value="P:regulation of DNA repair"/>
    <property type="evidence" value="ECO:0007669"/>
    <property type="project" value="UniProtKB-UniRule"/>
</dbReference>
<dbReference type="Gene3D" id="1.10.10.10">
    <property type="entry name" value="Winged helix-like DNA-binding domain superfamily/Winged helix DNA-binding domain"/>
    <property type="match status" value="4"/>
</dbReference>
<dbReference type="HAMAP" id="MF_01114">
    <property type="entry name" value="RecX"/>
    <property type="match status" value="1"/>
</dbReference>
<dbReference type="InterPro" id="IPR053924">
    <property type="entry name" value="RecX_HTH_2nd"/>
</dbReference>
<dbReference type="InterPro" id="IPR053925">
    <property type="entry name" value="RecX_HTH_3rd"/>
</dbReference>
<dbReference type="InterPro" id="IPR003783">
    <property type="entry name" value="Regulatory_RecX"/>
</dbReference>
<dbReference type="InterPro" id="IPR036388">
    <property type="entry name" value="WH-like_DNA-bd_sf"/>
</dbReference>
<dbReference type="NCBIfam" id="NF010733">
    <property type="entry name" value="PRK14135.1"/>
    <property type="match status" value="1"/>
</dbReference>
<dbReference type="PANTHER" id="PTHR33602">
    <property type="entry name" value="REGULATORY PROTEIN RECX FAMILY PROTEIN"/>
    <property type="match status" value="1"/>
</dbReference>
<dbReference type="PANTHER" id="PTHR33602:SF1">
    <property type="entry name" value="REGULATORY PROTEIN RECX FAMILY PROTEIN"/>
    <property type="match status" value="1"/>
</dbReference>
<dbReference type="Pfam" id="PF02631">
    <property type="entry name" value="RecX_HTH2"/>
    <property type="match status" value="1"/>
</dbReference>
<dbReference type="Pfam" id="PF21981">
    <property type="entry name" value="RecX_HTH3"/>
    <property type="match status" value="2"/>
</dbReference>
<name>RECX_LACLM</name>
<evidence type="ECO:0000255" key="1">
    <source>
        <dbReference type="HAMAP-Rule" id="MF_01114"/>
    </source>
</evidence>
<comment type="function">
    <text evidence="1">Modulates RecA activity.</text>
</comment>
<comment type="subcellular location">
    <subcellularLocation>
        <location evidence="1">Cytoplasm</location>
    </subcellularLocation>
</comment>
<comment type="similarity">
    <text evidence="1">Belongs to the RecX family.</text>
</comment>
<protein>
    <recommendedName>
        <fullName evidence="1">Regulatory protein RecX</fullName>
    </recommendedName>
</protein>
<feature type="chain" id="PRO_1000065182" description="Regulatory protein RecX">
    <location>
        <begin position="1"/>
        <end position="269"/>
    </location>
</feature>
<accession>A2RNY5</accession>
<reference key="1">
    <citation type="journal article" date="2007" name="J. Bacteriol.">
        <title>The complete genome sequence of the lactic acid bacterial paradigm Lactococcus lactis subsp. cremoris MG1363.</title>
        <authorList>
            <person name="Wegmann U."/>
            <person name="O'Connell-Motherway M."/>
            <person name="Zomer A."/>
            <person name="Buist G."/>
            <person name="Shearman C."/>
            <person name="Canchaya C."/>
            <person name="Ventura M."/>
            <person name="Goesmann A."/>
            <person name="Gasson M.J."/>
            <person name="Kuipers O.P."/>
            <person name="van Sinderen D."/>
            <person name="Kok J."/>
        </authorList>
    </citation>
    <scope>NUCLEOTIDE SEQUENCE [LARGE SCALE GENOMIC DNA]</scope>
    <source>
        <strain>MG1363</strain>
    </source>
</reference>
<organism>
    <name type="scientific">Lactococcus lactis subsp. cremoris (strain MG1363)</name>
    <dbReference type="NCBI Taxonomy" id="416870"/>
    <lineage>
        <taxon>Bacteria</taxon>
        <taxon>Bacillati</taxon>
        <taxon>Bacillota</taxon>
        <taxon>Bacilli</taxon>
        <taxon>Lactobacillales</taxon>
        <taxon>Streptococcaceae</taxon>
        <taxon>Lactococcus</taxon>
        <taxon>Lactococcus cremoris subsp. cremoris</taxon>
    </lineage>
</organism>
<keyword id="KW-0963">Cytoplasm</keyword>
<gene>
    <name evidence="1" type="primary">recX</name>
    <name type="ordered locus">llmg_2466</name>
</gene>